<name>VARA_VIOOD</name>
<evidence type="ECO:0000250" key="1">
    <source>
        <dbReference type="UniProtKB" id="P58446"/>
    </source>
</evidence>
<evidence type="ECO:0000255" key="2"/>
<evidence type="ECO:0000255" key="3">
    <source>
        <dbReference type="PROSITE-ProRule" id="PRU00395"/>
    </source>
</evidence>
<evidence type="ECO:0000269" key="4">
    <source>
    </source>
</evidence>
<evidence type="ECO:0000303" key="5">
    <source>
    </source>
</evidence>
<evidence type="ECO:0000305" key="6"/>
<evidence type="ECO:0000312" key="7">
    <source>
        <dbReference type="EMBL" id="AAU04395.1"/>
    </source>
</evidence>
<evidence type="ECO:0007829" key="8">
    <source>
        <dbReference type="PDB" id="1WN4"/>
    </source>
</evidence>
<proteinExistence type="evidence at protein level"/>
<organism>
    <name type="scientific">Viola odorata</name>
    <name type="common">Sweet violet</name>
    <dbReference type="NCBI Taxonomy" id="97441"/>
    <lineage>
        <taxon>Eukaryota</taxon>
        <taxon>Viridiplantae</taxon>
        <taxon>Streptophyta</taxon>
        <taxon>Embryophyta</taxon>
        <taxon>Tracheophyta</taxon>
        <taxon>Spermatophyta</taxon>
        <taxon>Magnoliopsida</taxon>
        <taxon>eudicotyledons</taxon>
        <taxon>Gunneridae</taxon>
        <taxon>Pentapetalae</taxon>
        <taxon>rosids</taxon>
        <taxon>fabids</taxon>
        <taxon>Malpighiales</taxon>
        <taxon>Violaceae</taxon>
        <taxon>Viola</taxon>
        <taxon>Viola subgen. Viola</taxon>
        <taxon>Viola sect. Viola</taxon>
        <taxon>Viola subsect. Viola</taxon>
    </lineage>
</organism>
<protein>
    <recommendedName>
        <fullName>Varv peptide A/Kalata-B1</fullName>
    </recommendedName>
    <alternativeName>
        <fullName>Cyclotide k1</fullName>
    </alternativeName>
    <component>
        <recommendedName>
            <fullName>Varv peptide A</fullName>
        </recommendedName>
    </component>
    <component>
        <recommendedName>
            <fullName>Kalata-B1</fullName>
        </recommendedName>
    </component>
</protein>
<keyword id="KW-0002">3D-structure</keyword>
<keyword id="KW-0204">Cytolysis</keyword>
<keyword id="KW-0903">Direct protein sequencing</keyword>
<keyword id="KW-1015">Disulfide bond</keyword>
<keyword id="KW-0354">Hemolysis</keyword>
<keyword id="KW-0960">Knottin</keyword>
<keyword id="KW-0611">Plant defense</keyword>
<keyword id="KW-0677">Repeat</keyword>
<keyword id="KW-0732">Signal</keyword>
<comment type="function">
    <text evidence="3 4 6">Probably participates in a plant defense mechanism. Has hemolytic activity.</text>
</comment>
<comment type="domain">
    <text evidence="1">The presence of a 'disulfide through disulfide knot' structurally defines this protein as a knottin.</text>
</comment>
<comment type="PTM">
    <text evidence="4">Varv peptide A and kalata-B1 are cyclic peptides.</text>
</comment>
<comment type="mass spectrometry">
    <molecule>Varv peptide A</molecule>
</comment>
<comment type="mass spectrometry">
    <molecule>Kalata-B1</molecule>
</comment>
<comment type="similarity">
    <text evidence="3">Belongs to the cyclotide family. Moebius subfamily.</text>
</comment>
<sequence>MKMFIVLVLSAAFALPAAFATEQDVITLQAYEELLKNGAANGMTKTVISSPVLEEALVSYSKNKLGGLPVCGETCVGGTCNTPGCSCSWPVCTRNSLESTKSANPLLEEALTAFAKKGLGGLPVCGETCVGGTCNTPGCTCSWPVCTRNALETQKPNHLLEEALVAFAKKGNLGGLPVCGETCVGGTCNTPGCSCSWPVCTRNALAM</sequence>
<accession>Q5USN7</accession>
<feature type="signal peptide" evidence="2">
    <location>
        <begin position="1"/>
        <end position="20"/>
    </location>
</feature>
<feature type="propeptide" id="PRO_0000294967" evidence="4">
    <location>
        <begin position="21"/>
        <end position="66"/>
    </location>
</feature>
<feature type="peptide" id="PRO_0000294968" description="Varv peptide A" evidence="3 4">
    <location>
        <begin position="67"/>
        <end position="95"/>
    </location>
</feature>
<feature type="propeptide" id="PRO_0000294969" evidence="4">
    <location>
        <begin position="96"/>
        <end position="120"/>
    </location>
</feature>
<feature type="peptide" id="PRO_0000294970" description="Kalata-B1" evidence="3 4">
    <location>
        <begin position="121"/>
        <end position="149"/>
    </location>
</feature>
<feature type="propeptide" id="PRO_0000294971" evidence="4">
    <location>
        <begin position="150"/>
        <end position="174"/>
    </location>
</feature>
<feature type="peptide" id="PRO_0000294972" description="Varv peptide A" evidence="3 4">
    <location>
        <begin position="175"/>
        <end position="203"/>
    </location>
</feature>
<feature type="propeptide" id="PRO_0000294973" evidence="4">
    <location>
        <begin position="204"/>
        <end position="207"/>
    </location>
</feature>
<feature type="disulfide bond" evidence="1 3">
    <location>
        <begin position="71"/>
        <end position="85"/>
    </location>
</feature>
<feature type="disulfide bond" evidence="1 3">
    <location>
        <begin position="75"/>
        <end position="87"/>
    </location>
</feature>
<feature type="disulfide bond" evidence="1 3">
    <location>
        <begin position="80"/>
        <end position="92"/>
    </location>
</feature>
<feature type="disulfide bond" evidence="1 3">
    <location>
        <begin position="125"/>
        <end position="139"/>
    </location>
</feature>
<feature type="disulfide bond" evidence="1 3">
    <location>
        <begin position="129"/>
        <end position="141"/>
    </location>
</feature>
<feature type="disulfide bond" evidence="1 3">
    <location>
        <begin position="134"/>
        <end position="146"/>
    </location>
</feature>
<feature type="disulfide bond" evidence="1 3">
    <location>
        <begin position="179"/>
        <end position="193"/>
    </location>
</feature>
<feature type="disulfide bond" evidence="1 3">
    <location>
        <begin position="183"/>
        <end position="195"/>
    </location>
</feature>
<feature type="disulfide bond" evidence="1 3">
    <location>
        <begin position="188"/>
        <end position="200"/>
    </location>
</feature>
<feature type="cross-link" description="Cyclopeptide (Gly-Asn)" evidence="4">
    <location>
        <begin position="67"/>
        <end position="95"/>
    </location>
</feature>
<feature type="cross-link" description="Cyclopeptide (Gly-Asn)" evidence="4">
    <location>
        <begin position="121"/>
        <end position="149"/>
    </location>
</feature>
<feature type="cross-link" description="Cyclopeptide (Gly-Asn)" evidence="4">
    <location>
        <begin position="175"/>
        <end position="203"/>
    </location>
</feature>
<feature type="helix" evidence="8">
    <location>
        <begin position="158"/>
        <end position="171"/>
    </location>
</feature>
<feature type="strand" evidence="8">
    <location>
        <begin position="172"/>
        <end position="174"/>
    </location>
</feature>
<reference evidence="7" key="1">
    <citation type="journal article" date="2004" name="J. Biol. Chem.">
        <title>Conserved structural and sequence elements implicated in the processing of gene-encoded circular proteins.</title>
        <authorList>
            <person name="Dutton J.L."/>
            <person name="Renda R.F."/>
            <person name="Waine C."/>
            <person name="Clark R.J."/>
            <person name="Daly N.L."/>
            <person name="Jennings C.V."/>
            <person name="Anderson M.A."/>
            <person name="Craik D.J."/>
        </authorList>
    </citation>
    <scope>NUCLEOTIDE SEQUENCE [MRNA]</scope>
    <source>
        <tissue evidence="7">Leaf</tissue>
    </source>
</reference>
<reference evidence="6" key="2">
    <citation type="journal article" date="2006" name="Biochem. J.">
        <title>A novel suite of cyclotides from Viola odorata: sequence variation and the implications for structure, function and stability.</title>
        <authorList>
            <person name="Ireland D.C."/>
            <person name="Colgrave M.L."/>
            <person name="Craik D.J."/>
        </authorList>
    </citation>
    <scope>PROTEIN SEQUENCE OF 67-95; 121-149 AND 175-203</scope>
    <scope>FUNCTION</scope>
    <scope>MASS SPECTROMETRY</scope>
</reference>
<dbReference type="EMBL" id="AY630566">
    <property type="protein sequence ID" value="AAU04395.1"/>
    <property type="molecule type" value="mRNA"/>
</dbReference>
<dbReference type="PDB" id="1WN4">
    <property type="method" value="NMR"/>
    <property type="chains" value="A=150-177"/>
</dbReference>
<dbReference type="PDBsum" id="1WN4"/>
<dbReference type="SMR" id="Q5USN7"/>
<dbReference type="TCDB" id="1.A.118.1.3">
    <property type="family name" value="the plant cycltide (cyclotide) family"/>
</dbReference>
<dbReference type="EvolutionaryTrace" id="Q5USN7"/>
<dbReference type="GO" id="GO:0006952">
    <property type="term" value="P:defense response"/>
    <property type="evidence" value="ECO:0007669"/>
    <property type="project" value="UniProtKB-KW"/>
</dbReference>
<dbReference type="GO" id="GO:0031640">
    <property type="term" value="P:killing of cells of another organism"/>
    <property type="evidence" value="ECO:0007669"/>
    <property type="project" value="UniProtKB-KW"/>
</dbReference>
<dbReference type="InterPro" id="IPR005535">
    <property type="entry name" value="Cyclotide"/>
</dbReference>
<dbReference type="InterPro" id="IPR012324">
    <property type="entry name" value="Cyclotide_moebius_CS"/>
</dbReference>
<dbReference type="InterPro" id="IPR036146">
    <property type="entry name" value="Cyclotide_sf"/>
</dbReference>
<dbReference type="Pfam" id="PF03784">
    <property type="entry name" value="Cyclotide"/>
    <property type="match status" value="3"/>
</dbReference>
<dbReference type="SUPFAM" id="SSF57038">
    <property type="entry name" value="Cyclotides"/>
    <property type="match status" value="3"/>
</dbReference>
<dbReference type="PROSITE" id="PS51052">
    <property type="entry name" value="CYCLOTIDE"/>
    <property type="match status" value="3"/>
</dbReference>
<dbReference type="PROSITE" id="PS60009">
    <property type="entry name" value="CYCLOTIDE_MOEBIUS"/>
    <property type="match status" value="3"/>
</dbReference>
<gene>
    <name evidence="5" type="primary">Vok1</name>
</gene>